<feature type="chain" id="PRO_1000188947" description="Urease subunit beta">
    <location>
        <begin position="1"/>
        <end position="118"/>
    </location>
</feature>
<reference key="1">
    <citation type="submission" date="2008-08" db="EMBL/GenBank/DDBJ databases">
        <title>Complete sequence of Vibrio fischeri strain MJ11.</title>
        <authorList>
            <person name="Mandel M.J."/>
            <person name="Stabb E.V."/>
            <person name="Ruby E.G."/>
            <person name="Ferriera S."/>
            <person name="Johnson J."/>
            <person name="Kravitz S."/>
            <person name="Beeson K."/>
            <person name="Sutton G."/>
            <person name="Rogers Y.-H."/>
            <person name="Friedman R."/>
            <person name="Frazier M."/>
            <person name="Venter J.C."/>
        </authorList>
    </citation>
    <scope>NUCLEOTIDE SEQUENCE [LARGE SCALE GENOMIC DNA]</scope>
    <source>
        <strain>MJ11</strain>
    </source>
</reference>
<organism>
    <name type="scientific">Aliivibrio fischeri (strain MJ11)</name>
    <name type="common">Vibrio fischeri</name>
    <dbReference type="NCBI Taxonomy" id="388396"/>
    <lineage>
        <taxon>Bacteria</taxon>
        <taxon>Pseudomonadati</taxon>
        <taxon>Pseudomonadota</taxon>
        <taxon>Gammaproteobacteria</taxon>
        <taxon>Vibrionales</taxon>
        <taxon>Vibrionaceae</taxon>
        <taxon>Aliivibrio</taxon>
    </lineage>
</organism>
<evidence type="ECO:0000255" key="1">
    <source>
        <dbReference type="HAMAP-Rule" id="MF_01954"/>
    </source>
</evidence>
<dbReference type="EC" id="3.5.1.5" evidence="1"/>
<dbReference type="EMBL" id="CP001139">
    <property type="protein sequence ID" value="ACH65212.1"/>
    <property type="molecule type" value="Genomic_DNA"/>
</dbReference>
<dbReference type="RefSeq" id="WP_012532897.1">
    <property type="nucleotide sequence ID" value="NC_011184.1"/>
</dbReference>
<dbReference type="SMR" id="B5FBC7"/>
<dbReference type="KEGG" id="vfm:VFMJ11_0692"/>
<dbReference type="HOGENOM" id="CLU_129707_1_1_6"/>
<dbReference type="UniPathway" id="UPA00258">
    <property type="reaction ID" value="UER00370"/>
</dbReference>
<dbReference type="Proteomes" id="UP000001857">
    <property type="component" value="Chromosome I"/>
</dbReference>
<dbReference type="GO" id="GO:0035550">
    <property type="term" value="C:urease complex"/>
    <property type="evidence" value="ECO:0007669"/>
    <property type="project" value="InterPro"/>
</dbReference>
<dbReference type="GO" id="GO:0009039">
    <property type="term" value="F:urease activity"/>
    <property type="evidence" value="ECO:0007669"/>
    <property type="project" value="UniProtKB-UniRule"/>
</dbReference>
<dbReference type="GO" id="GO:0043419">
    <property type="term" value="P:urea catabolic process"/>
    <property type="evidence" value="ECO:0007669"/>
    <property type="project" value="UniProtKB-UniRule"/>
</dbReference>
<dbReference type="CDD" id="cd00407">
    <property type="entry name" value="Urease_beta"/>
    <property type="match status" value="1"/>
</dbReference>
<dbReference type="FunFam" id="2.10.150.10:FF:000001">
    <property type="entry name" value="Urease subunit beta"/>
    <property type="match status" value="1"/>
</dbReference>
<dbReference type="Gene3D" id="2.10.150.10">
    <property type="entry name" value="Urease, beta subunit"/>
    <property type="match status" value="1"/>
</dbReference>
<dbReference type="HAMAP" id="MF_01954">
    <property type="entry name" value="Urease_beta"/>
    <property type="match status" value="1"/>
</dbReference>
<dbReference type="InterPro" id="IPR002019">
    <property type="entry name" value="Urease_beta-like"/>
</dbReference>
<dbReference type="InterPro" id="IPR036461">
    <property type="entry name" value="Urease_betasu_sf"/>
</dbReference>
<dbReference type="InterPro" id="IPR050069">
    <property type="entry name" value="Urease_subunit"/>
</dbReference>
<dbReference type="NCBIfam" id="NF009682">
    <property type="entry name" value="PRK13203.1"/>
    <property type="match status" value="1"/>
</dbReference>
<dbReference type="NCBIfam" id="TIGR00192">
    <property type="entry name" value="urease_beta"/>
    <property type="match status" value="1"/>
</dbReference>
<dbReference type="PANTHER" id="PTHR33569">
    <property type="entry name" value="UREASE"/>
    <property type="match status" value="1"/>
</dbReference>
<dbReference type="PANTHER" id="PTHR33569:SF1">
    <property type="entry name" value="UREASE"/>
    <property type="match status" value="1"/>
</dbReference>
<dbReference type="Pfam" id="PF00699">
    <property type="entry name" value="Urease_beta"/>
    <property type="match status" value="1"/>
</dbReference>
<dbReference type="SUPFAM" id="SSF51278">
    <property type="entry name" value="Urease, beta-subunit"/>
    <property type="match status" value="1"/>
</dbReference>
<keyword id="KW-0963">Cytoplasm</keyword>
<keyword id="KW-0378">Hydrolase</keyword>
<name>URE2_ALIFM</name>
<sequence>MIPGELRVNDDLGQIELNVGRTTQTLSVANYGDRPIQVGSHYHFYEVNEALHFEREPTKGFRLNIPAGMAIRFEPGQRRTIELVEFAGKREIYGFQAAIMGNVDGHITATISDDKEVK</sequence>
<comment type="catalytic activity">
    <reaction evidence="1">
        <text>urea + 2 H2O + H(+) = hydrogencarbonate + 2 NH4(+)</text>
        <dbReference type="Rhea" id="RHEA:20557"/>
        <dbReference type="ChEBI" id="CHEBI:15377"/>
        <dbReference type="ChEBI" id="CHEBI:15378"/>
        <dbReference type="ChEBI" id="CHEBI:16199"/>
        <dbReference type="ChEBI" id="CHEBI:17544"/>
        <dbReference type="ChEBI" id="CHEBI:28938"/>
        <dbReference type="EC" id="3.5.1.5"/>
    </reaction>
</comment>
<comment type="pathway">
    <text evidence="1">Nitrogen metabolism; urea degradation; CO(2) and NH(3) from urea (urease route): step 1/1.</text>
</comment>
<comment type="subunit">
    <text evidence="1">Heterotrimer of UreA (gamma), UreB (beta) and UreC (alpha) subunits. Three heterotrimers associate to form the active enzyme.</text>
</comment>
<comment type="subcellular location">
    <subcellularLocation>
        <location evidence="1">Cytoplasm</location>
    </subcellularLocation>
</comment>
<comment type="similarity">
    <text evidence="1">Belongs to the urease beta subunit family.</text>
</comment>
<accession>B5FBC7</accession>
<protein>
    <recommendedName>
        <fullName evidence="1">Urease subunit beta</fullName>
        <ecNumber evidence="1">3.5.1.5</ecNumber>
    </recommendedName>
    <alternativeName>
        <fullName evidence="1">Urea amidohydrolase subunit beta</fullName>
    </alternativeName>
</protein>
<gene>
    <name evidence="1" type="primary">ureB</name>
    <name type="ordered locus">VFMJ11_0692</name>
</gene>
<proteinExistence type="inferred from homology"/>